<evidence type="ECO:0000255" key="1">
    <source>
        <dbReference type="HAMAP-Rule" id="MF_00248"/>
    </source>
</evidence>
<gene>
    <name evidence="1" type="primary">hslV</name>
    <name type="ordered locus">HDEF_1271</name>
</gene>
<feature type="chain" id="PRO_1000204507" description="ATP-dependent protease subunit HslV">
    <location>
        <begin position="1"/>
        <end position="178"/>
    </location>
</feature>
<feature type="active site" evidence="1">
    <location>
        <position position="2"/>
    </location>
</feature>
<feature type="binding site" evidence="1">
    <location>
        <position position="157"/>
    </location>
    <ligand>
        <name>Na(+)</name>
        <dbReference type="ChEBI" id="CHEBI:29101"/>
    </ligand>
</feature>
<feature type="binding site" evidence="1">
    <location>
        <position position="160"/>
    </location>
    <ligand>
        <name>Na(+)</name>
        <dbReference type="ChEBI" id="CHEBI:29101"/>
    </ligand>
</feature>
<feature type="binding site" evidence="1">
    <location>
        <position position="163"/>
    </location>
    <ligand>
        <name>Na(+)</name>
        <dbReference type="ChEBI" id="CHEBI:29101"/>
    </ligand>
</feature>
<protein>
    <recommendedName>
        <fullName evidence="1">ATP-dependent protease subunit HslV</fullName>
        <ecNumber evidence="1">3.4.25.2</ecNumber>
    </recommendedName>
</protein>
<sequence length="178" mass="19234">MTTIVSVRRHNHVVIGGDGQVTLGNTVMKGNAKKVRRLHHDKVIAGFAGGTADAFTLFELFEAKLKLCSGQLTKAAVEMAKDWRTDRMLRRLEALLAVADETASLIITGNGDVIQPEDDLIAIGSGGPYAQASARALLENTNLSAREIVEKSLTIAGNICIYTNQYPTIEELKIKTKG</sequence>
<dbReference type="EC" id="3.4.25.2" evidence="1"/>
<dbReference type="EMBL" id="CP001277">
    <property type="protein sequence ID" value="ACQ67924.1"/>
    <property type="molecule type" value="Genomic_DNA"/>
</dbReference>
<dbReference type="RefSeq" id="WP_015873715.1">
    <property type="nucleotide sequence ID" value="NC_012751.1"/>
</dbReference>
<dbReference type="SMR" id="C4K5T1"/>
<dbReference type="STRING" id="572265.HDEF_1271"/>
<dbReference type="MEROPS" id="T01.006"/>
<dbReference type="GeneID" id="66260971"/>
<dbReference type="KEGG" id="hde:HDEF_1271"/>
<dbReference type="eggNOG" id="COG5405">
    <property type="taxonomic scope" value="Bacteria"/>
</dbReference>
<dbReference type="HOGENOM" id="CLU_093872_1_0_6"/>
<dbReference type="Proteomes" id="UP000002334">
    <property type="component" value="Chromosome"/>
</dbReference>
<dbReference type="GO" id="GO:0009376">
    <property type="term" value="C:HslUV protease complex"/>
    <property type="evidence" value="ECO:0007669"/>
    <property type="project" value="UniProtKB-UniRule"/>
</dbReference>
<dbReference type="GO" id="GO:0005839">
    <property type="term" value="C:proteasome core complex"/>
    <property type="evidence" value="ECO:0007669"/>
    <property type="project" value="InterPro"/>
</dbReference>
<dbReference type="GO" id="GO:0046872">
    <property type="term" value="F:metal ion binding"/>
    <property type="evidence" value="ECO:0007669"/>
    <property type="project" value="UniProtKB-KW"/>
</dbReference>
<dbReference type="GO" id="GO:0004298">
    <property type="term" value="F:threonine-type endopeptidase activity"/>
    <property type="evidence" value="ECO:0007669"/>
    <property type="project" value="UniProtKB-KW"/>
</dbReference>
<dbReference type="GO" id="GO:0051603">
    <property type="term" value="P:proteolysis involved in protein catabolic process"/>
    <property type="evidence" value="ECO:0007669"/>
    <property type="project" value="InterPro"/>
</dbReference>
<dbReference type="CDD" id="cd01913">
    <property type="entry name" value="protease_HslV"/>
    <property type="match status" value="1"/>
</dbReference>
<dbReference type="FunFam" id="3.60.20.10:FF:000002">
    <property type="entry name" value="ATP-dependent protease subunit HslV"/>
    <property type="match status" value="1"/>
</dbReference>
<dbReference type="Gene3D" id="3.60.20.10">
    <property type="entry name" value="Glutamine Phosphoribosylpyrophosphate, subunit 1, domain 1"/>
    <property type="match status" value="1"/>
</dbReference>
<dbReference type="HAMAP" id="MF_00248">
    <property type="entry name" value="HslV"/>
    <property type="match status" value="1"/>
</dbReference>
<dbReference type="InterPro" id="IPR022281">
    <property type="entry name" value="ATP-dep_Prtase_HsIV_su"/>
</dbReference>
<dbReference type="InterPro" id="IPR029055">
    <property type="entry name" value="Ntn_hydrolases_N"/>
</dbReference>
<dbReference type="InterPro" id="IPR001353">
    <property type="entry name" value="Proteasome_sua/b"/>
</dbReference>
<dbReference type="InterPro" id="IPR023333">
    <property type="entry name" value="Proteasome_suB-type"/>
</dbReference>
<dbReference type="NCBIfam" id="TIGR03692">
    <property type="entry name" value="ATP_dep_HslV"/>
    <property type="match status" value="1"/>
</dbReference>
<dbReference type="NCBIfam" id="NF003964">
    <property type="entry name" value="PRK05456.1"/>
    <property type="match status" value="1"/>
</dbReference>
<dbReference type="PANTHER" id="PTHR32194:SF0">
    <property type="entry name" value="ATP-DEPENDENT PROTEASE SUBUNIT HSLV"/>
    <property type="match status" value="1"/>
</dbReference>
<dbReference type="PANTHER" id="PTHR32194">
    <property type="entry name" value="METALLOPROTEASE TLDD"/>
    <property type="match status" value="1"/>
</dbReference>
<dbReference type="Pfam" id="PF00227">
    <property type="entry name" value="Proteasome"/>
    <property type="match status" value="1"/>
</dbReference>
<dbReference type="PIRSF" id="PIRSF039093">
    <property type="entry name" value="HslV"/>
    <property type="match status" value="1"/>
</dbReference>
<dbReference type="SUPFAM" id="SSF56235">
    <property type="entry name" value="N-terminal nucleophile aminohydrolases (Ntn hydrolases)"/>
    <property type="match status" value="1"/>
</dbReference>
<dbReference type="PROSITE" id="PS51476">
    <property type="entry name" value="PROTEASOME_BETA_2"/>
    <property type="match status" value="1"/>
</dbReference>
<reference key="1">
    <citation type="journal article" date="2009" name="Proc. Natl. Acad. Sci. U.S.A.">
        <title>Hamiltonella defensa, genome evolution of protective bacterial endosymbiont from pathogenic ancestors.</title>
        <authorList>
            <person name="Degnan P.H."/>
            <person name="Yu Y."/>
            <person name="Sisneros N."/>
            <person name="Wing R.A."/>
            <person name="Moran N.A."/>
        </authorList>
    </citation>
    <scope>NUCLEOTIDE SEQUENCE [LARGE SCALE GENOMIC DNA]</scope>
    <source>
        <strain>5AT</strain>
    </source>
</reference>
<keyword id="KW-0021">Allosteric enzyme</keyword>
<keyword id="KW-0963">Cytoplasm</keyword>
<keyword id="KW-0378">Hydrolase</keyword>
<keyword id="KW-0479">Metal-binding</keyword>
<keyword id="KW-0645">Protease</keyword>
<keyword id="KW-0915">Sodium</keyword>
<keyword id="KW-0888">Threonine protease</keyword>
<accession>C4K5T1</accession>
<comment type="function">
    <text evidence="1">Protease subunit of a proteasome-like degradation complex believed to be a general protein degrading machinery.</text>
</comment>
<comment type="catalytic activity">
    <reaction evidence="1">
        <text>ATP-dependent cleavage of peptide bonds with broad specificity.</text>
        <dbReference type="EC" id="3.4.25.2"/>
    </reaction>
</comment>
<comment type="activity regulation">
    <text evidence="1">Allosterically activated by HslU binding.</text>
</comment>
<comment type="subunit">
    <text evidence="1">A double ring-shaped homohexamer of HslV is capped on each side by a ring-shaped HslU homohexamer. The assembly of the HslU/HslV complex is dependent on binding of ATP.</text>
</comment>
<comment type="subcellular location">
    <subcellularLocation>
        <location evidence="1">Cytoplasm</location>
    </subcellularLocation>
</comment>
<comment type="similarity">
    <text evidence="1">Belongs to the peptidase T1B family. HslV subfamily.</text>
</comment>
<name>HSLV_HAMD5</name>
<proteinExistence type="inferred from homology"/>
<organism>
    <name type="scientific">Hamiltonella defensa subsp. Acyrthosiphon pisum (strain 5AT)</name>
    <dbReference type="NCBI Taxonomy" id="572265"/>
    <lineage>
        <taxon>Bacteria</taxon>
        <taxon>Pseudomonadati</taxon>
        <taxon>Pseudomonadota</taxon>
        <taxon>Gammaproteobacteria</taxon>
        <taxon>Enterobacterales</taxon>
        <taxon>Enterobacteriaceae</taxon>
        <taxon>aphid secondary symbionts</taxon>
        <taxon>Candidatus Hamiltonella</taxon>
    </lineage>
</organism>